<evidence type="ECO:0000255" key="1">
    <source>
        <dbReference type="HAMAP-Rule" id="MF_02005"/>
    </source>
</evidence>
<reference key="1">
    <citation type="submission" date="2007-09" db="EMBL/GenBank/DDBJ databases">
        <title>Complete genome sequence of Rickettsia canadensis.</title>
        <authorList>
            <person name="Madan A."/>
            <person name="Fahey J."/>
            <person name="Helton E."/>
            <person name="Ketteman M."/>
            <person name="Madan A."/>
            <person name="Rodrigues S."/>
            <person name="Sanchez A."/>
            <person name="Whiting M."/>
            <person name="Dasch G."/>
            <person name="Eremeeva M."/>
        </authorList>
    </citation>
    <scope>NUCLEOTIDE SEQUENCE [LARGE SCALE GENOMIC DNA]</scope>
    <source>
        <strain>McKiel</strain>
    </source>
</reference>
<name>SYV_RICCK</name>
<accession>A8EZQ5</accession>
<gene>
    <name evidence="1" type="primary">valS</name>
    <name type="ordered locus">A1E_04565</name>
</gene>
<sequence length="813" mass="94182">MKAFPKNYNFTENEKKWQRIWQEKQIYAYDPNISKEETYIVDTPPPTVSGQLHIGHVYSYTQTDFIVRFQRMIGKNIFYPMGFDDNGLPTERLVEKQKQIKAYNIGRNKFIQICEEVVASEEEKFRGLLNKIALSVDWSLEYQTISPLSQKISQMSFLDLVKRGEIYRNDQPILWDPVDGTALAQADIKDTENSSLMNYITFKTEQGEPLTIATTRPELLPACVAVFYHPDDRHYKHLAGKFVITPLFKDKVPLLADPLVQQDKGTGLVMCCTFGDQTDITWWKTHNLPLKTIITKKGTIDFPNDIGIDRLKIKEARAKIIDILKEQNLLIKQEEITHIVKCAERSGSPLEILTMPQWFVKTISHKEALLKRANELNWHPKNMKIRLENWINAISWDWCISRQRCFGVPFPVWYSKRVGEEGKILYADIAQLPVDPLRDLPIGYSRDEVEPDLDVMDTWATSSVSPQLSTHGISDDFAINKNRHDKLFPMDLRPQAHEIIRTWAFYTILKAHLHQNTLPWKNIMVSGWCLAEDRSKMSKSKGNVLVPEKLLEQYGSDVIRYWSANSKLGADTAYSEDVMKNGKRLVNKLWNAAKFVSIHLHKLKDQDKKAKLLEVKEIITNEFDKWMINKLVELVNAVTNELQNYEYANAMHLTEKFFLAVFCDNYLEISKTRAYDEDNKNLSGQYSSILTLYHVMQTLLKLFAPFMPHITEELYQILYNDKESIHIKGTFANHDNLHYNIDTKQAEGMLKILDIVRKFKAEKNLSIKAPIKLLKISGIVLSEELAEDLKNVTSAEEIKFEIQDNKIKIDIII</sequence>
<comment type="function">
    <text evidence="1">Catalyzes the attachment of valine to tRNA(Val). As ValRS can inadvertently accommodate and process structurally similar amino acids such as threonine, to avoid such errors, it has a 'posttransfer' editing activity that hydrolyzes mischarged Thr-tRNA(Val) in a tRNA-dependent manner.</text>
</comment>
<comment type="catalytic activity">
    <reaction evidence="1">
        <text>tRNA(Val) + L-valine + ATP = L-valyl-tRNA(Val) + AMP + diphosphate</text>
        <dbReference type="Rhea" id="RHEA:10704"/>
        <dbReference type="Rhea" id="RHEA-COMP:9672"/>
        <dbReference type="Rhea" id="RHEA-COMP:9708"/>
        <dbReference type="ChEBI" id="CHEBI:30616"/>
        <dbReference type="ChEBI" id="CHEBI:33019"/>
        <dbReference type="ChEBI" id="CHEBI:57762"/>
        <dbReference type="ChEBI" id="CHEBI:78442"/>
        <dbReference type="ChEBI" id="CHEBI:78537"/>
        <dbReference type="ChEBI" id="CHEBI:456215"/>
        <dbReference type="EC" id="6.1.1.9"/>
    </reaction>
</comment>
<comment type="subunit">
    <text evidence="1">Monomer.</text>
</comment>
<comment type="subcellular location">
    <subcellularLocation>
        <location evidence="1">Cytoplasm</location>
    </subcellularLocation>
</comment>
<comment type="domain">
    <text evidence="1">ValRS has two distinct active sites: one for aminoacylation and one for editing. The misactivated threonine is translocated from the active site to the editing site.</text>
</comment>
<comment type="similarity">
    <text evidence="1">Belongs to the class-I aminoacyl-tRNA synthetase family. ValS type 2 subfamily.</text>
</comment>
<organism>
    <name type="scientific">Rickettsia canadensis (strain McKiel)</name>
    <dbReference type="NCBI Taxonomy" id="293613"/>
    <lineage>
        <taxon>Bacteria</taxon>
        <taxon>Pseudomonadati</taxon>
        <taxon>Pseudomonadota</taxon>
        <taxon>Alphaproteobacteria</taxon>
        <taxon>Rickettsiales</taxon>
        <taxon>Rickettsiaceae</taxon>
        <taxon>Rickettsieae</taxon>
        <taxon>Rickettsia</taxon>
        <taxon>belli group</taxon>
    </lineage>
</organism>
<dbReference type="EC" id="6.1.1.9" evidence="1"/>
<dbReference type="EMBL" id="CP000409">
    <property type="protein sequence ID" value="ABV73838.1"/>
    <property type="molecule type" value="Genomic_DNA"/>
</dbReference>
<dbReference type="RefSeq" id="WP_012149033.1">
    <property type="nucleotide sequence ID" value="NC_009879.1"/>
</dbReference>
<dbReference type="SMR" id="A8EZQ5"/>
<dbReference type="STRING" id="293613.A1E_04565"/>
<dbReference type="KEGG" id="rcm:A1E_04565"/>
<dbReference type="eggNOG" id="COG0525">
    <property type="taxonomic scope" value="Bacteria"/>
</dbReference>
<dbReference type="HOGENOM" id="CLU_001493_0_2_5"/>
<dbReference type="Proteomes" id="UP000007056">
    <property type="component" value="Chromosome"/>
</dbReference>
<dbReference type="GO" id="GO:0005829">
    <property type="term" value="C:cytosol"/>
    <property type="evidence" value="ECO:0007669"/>
    <property type="project" value="TreeGrafter"/>
</dbReference>
<dbReference type="GO" id="GO:0002161">
    <property type="term" value="F:aminoacyl-tRNA deacylase activity"/>
    <property type="evidence" value="ECO:0007669"/>
    <property type="project" value="InterPro"/>
</dbReference>
<dbReference type="GO" id="GO:0005524">
    <property type="term" value="F:ATP binding"/>
    <property type="evidence" value="ECO:0007669"/>
    <property type="project" value="UniProtKB-UniRule"/>
</dbReference>
<dbReference type="GO" id="GO:0004832">
    <property type="term" value="F:valine-tRNA ligase activity"/>
    <property type="evidence" value="ECO:0007669"/>
    <property type="project" value="UniProtKB-UniRule"/>
</dbReference>
<dbReference type="GO" id="GO:0006438">
    <property type="term" value="P:valyl-tRNA aminoacylation"/>
    <property type="evidence" value="ECO:0007669"/>
    <property type="project" value="UniProtKB-UniRule"/>
</dbReference>
<dbReference type="CDD" id="cd07962">
    <property type="entry name" value="Anticodon_Ia_Val"/>
    <property type="match status" value="1"/>
</dbReference>
<dbReference type="FunFam" id="1.10.730.10:FF:000033">
    <property type="entry name" value="Valine--tRNA ligase"/>
    <property type="match status" value="1"/>
</dbReference>
<dbReference type="FunFam" id="3.40.50.620:FF:000192">
    <property type="entry name" value="Valine--tRNA ligase"/>
    <property type="match status" value="1"/>
</dbReference>
<dbReference type="Gene3D" id="3.40.50.620">
    <property type="entry name" value="HUPs"/>
    <property type="match status" value="2"/>
</dbReference>
<dbReference type="Gene3D" id="1.10.730.10">
    <property type="entry name" value="Isoleucyl-tRNA Synthetase, Domain 1"/>
    <property type="match status" value="1"/>
</dbReference>
<dbReference type="HAMAP" id="MF_02005">
    <property type="entry name" value="Val_tRNA_synth_type2"/>
    <property type="match status" value="1"/>
</dbReference>
<dbReference type="InterPro" id="IPR001412">
    <property type="entry name" value="aa-tRNA-synth_I_CS"/>
</dbReference>
<dbReference type="InterPro" id="IPR002300">
    <property type="entry name" value="aa-tRNA-synth_Ia"/>
</dbReference>
<dbReference type="InterPro" id="IPR033705">
    <property type="entry name" value="Anticodon_Ia_Val"/>
</dbReference>
<dbReference type="InterPro" id="IPR013155">
    <property type="entry name" value="M/V/L/I-tRNA-synth_anticd-bd"/>
</dbReference>
<dbReference type="InterPro" id="IPR014729">
    <property type="entry name" value="Rossmann-like_a/b/a_fold"/>
</dbReference>
<dbReference type="InterPro" id="IPR009080">
    <property type="entry name" value="tRNAsynth_Ia_anticodon-bd"/>
</dbReference>
<dbReference type="InterPro" id="IPR009008">
    <property type="entry name" value="Val/Leu/Ile-tRNA-synth_edit"/>
</dbReference>
<dbReference type="InterPro" id="IPR022874">
    <property type="entry name" value="Valine-tRNA_ligase_type_2"/>
</dbReference>
<dbReference type="InterPro" id="IPR002303">
    <property type="entry name" value="Valyl-tRNA_ligase"/>
</dbReference>
<dbReference type="NCBIfam" id="NF009687">
    <property type="entry name" value="PRK13208.1"/>
    <property type="match status" value="1"/>
</dbReference>
<dbReference type="NCBIfam" id="TIGR00422">
    <property type="entry name" value="valS"/>
    <property type="match status" value="1"/>
</dbReference>
<dbReference type="PANTHER" id="PTHR11946:SF93">
    <property type="entry name" value="VALINE--TRNA LIGASE, CHLOROPLASTIC_MITOCHONDRIAL 2"/>
    <property type="match status" value="1"/>
</dbReference>
<dbReference type="PANTHER" id="PTHR11946">
    <property type="entry name" value="VALYL-TRNA SYNTHETASES"/>
    <property type="match status" value="1"/>
</dbReference>
<dbReference type="Pfam" id="PF08264">
    <property type="entry name" value="Anticodon_1"/>
    <property type="match status" value="1"/>
</dbReference>
<dbReference type="Pfam" id="PF00133">
    <property type="entry name" value="tRNA-synt_1"/>
    <property type="match status" value="1"/>
</dbReference>
<dbReference type="PRINTS" id="PR00986">
    <property type="entry name" value="TRNASYNTHVAL"/>
</dbReference>
<dbReference type="SUPFAM" id="SSF47323">
    <property type="entry name" value="Anticodon-binding domain of a subclass of class I aminoacyl-tRNA synthetases"/>
    <property type="match status" value="1"/>
</dbReference>
<dbReference type="SUPFAM" id="SSF52374">
    <property type="entry name" value="Nucleotidylyl transferase"/>
    <property type="match status" value="1"/>
</dbReference>
<dbReference type="SUPFAM" id="SSF50677">
    <property type="entry name" value="ValRS/IleRS/LeuRS editing domain"/>
    <property type="match status" value="1"/>
</dbReference>
<dbReference type="PROSITE" id="PS00178">
    <property type="entry name" value="AA_TRNA_LIGASE_I"/>
    <property type="match status" value="1"/>
</dbReference>
<keyword id="KW-0030">Aminoacyl-tRNA synthetase</keyword>
<keyword id="KW-0067">ATP-binding</keyword>
<keyword id="KW-0963">Cytoplasm</keyword>
<keyword id="KW-0436">Ligase</keyword>
<keyword id="KW-0547">Nucleotide-binding</keyword>
<keyword id="KW-0648">Protein biosynthesis</keyword>
<proteinExistence type="inferred from homology"/>
<feature type="chain" id="PRO_1000022184" description="Valine--tRNA ligase">
    <location>
        <begin position="1"/>
        <end position="813"/>
    </location>
</feature>
<feature type="short sequence motif" description="'HIGH' region">
    <location>
        <begin position="46"/>
        <end position="56"/>
    </location>
</feature>
<feature type="short sequence motif" description="'KMSKS' region">
    <location>
        <begin position="536"/>
        <end position="540"/>
    </location>
</feature>
<feature type="binding site" evidence="1">
    <location>
        <position position="539"/>
    </location>
    <ligand>
        <name>ATP</name>
        <dbReference type="ChEBI" id="CHEBI:30616"/>
    </ligand>
</feature>
<protein>
    <recommendedName>
        <fullName evidence="1">Valine--tRNA ligase</fullName>
        <ecNumber evidence="1">6.1.1.9</ecNumber>
    </recommendedName>
    <alternativeName>
        <fullName evidence="1">Valyl-tRNA synthetase</fullName>
        <shortName evidence="1">ValRS</shortName>
    </alternativeName>
</protein>